<feature type="chain" id="PRO_0000228021" description="Putative mitochondrial import inner membrane translocase subunit Tim8 A-B">
    <location>
        <begin position="1"/>
        <end position="97"/>
    </location>
</feature>
<feature type="short sequence motif" description="Twin CX3C motif">
    <location>
        <begin position="43"/>
        <end position="66"/>
    </location>
</feature>
<feature type="disulfide bond" evidence="1">
    <location>
        <begin position="43"/>
        <end position="66"/>
    </location>
</feature>
<feature type="disulfide bond" evidence="1">
    <location>
        <begin position="47"/>
        <end position="62"/>
    </location>
</feature>
<sequence>MESAWSSRGTSLGSSDPQLQRFMEAEVQKQRVQLLIHHMTELCWEKCMDKPGPRLDGRAELCLVNCVERFIDTSQFILNRLEQTQKARPLFSERLSD</sequence>
<dbReference type="EMBL" id="BC099499">
    <property type="protein sequence ID" value="AAH99499.1"/>
    <property type="molecule type" value="mRNA"/>
</dbReference>
<dbReference type="CCDS" id="CCDS37020.1"/>
<dbReference type="RefSeq" id="NP_001032833.1">
    <property type="nucleotide sequence ID" value="NM_001037744.1"/>
</dbReference>
<dbReference type="RefSeq" id="XP_006518982.1">
    <property type="nucleotide sequence ID" value="XM_006518919.4"/>
</dbReference>
<dbReference type="SMR" id="Q4FZG7"/>
<dbReference type="BioGRID" id="230136">
    <property type="interactions" value="1"/>
</dbReference>
<dbReference type="FunCoup" id="Q4FZG7">
    <property type="interactions" value="561"/>
</dbReference>
<dbReference type="STRING" id="10090.ENSMUSP00000047497"/>
<dbReference type="iPTMnet" id="Q4FZG7"/>
<dbReference type="PhosphoSitePlus" id="Q4FZG7"/>
<dbReference type="jPOST" id="Q4FZG7"/>
<dbReference type="PaxDb" id="10090-ENSMUSP00000047497"/>
<dbReference type="PeptideAtlas" id="Q4FZG7"/>
<dbReference type="ProteomicsDB" id="259023"/>
<dbReference type="Ensembl" id="ENSMUST00000045976.7">
    <property type="protein sequence ID" value="ENSMUSP00000047497.7"/>
    <property type="gene ID" value="ENSMUSG00000071229.4"/>
</dbReference>
<dbReference type="GeneID" id="223262"/>
<dbReference type="KEGG" id="mmu:223262"/>
<dbReference type="UCSC" id="uc007var.1">
    <property type="organism name" value="mouse"/>
</dbReference>
<dbReference type="AGR" id="MGI:3615492"/>
<dbReference type="CTD" id="223262"/>
<dbReference type="MGI" id="MGI:3615492">
    <property type="gene designation" value="Timm8a2"/>
</dbReference>
<dbReference type="VEuPathDB" id="HostDB:ENSMUSG00000071229"/>
<dbReference type="eggNOG" id="KOG3489">
    <property type="taxonomic scope" value="Eukaryota"/>
</dbReference>
<dbReference type="GeneTree" id="ENSGT00940000154661"/>
<dbReference type="HOGENOM" id="CLU_141397_1_2_1"/>
<dbReference type="InParanoid" id="Q4FZG7"/>
<dbReference type="OMA" id="QATQVCL"/>
<dbReference type="OrthoDB" id="344165at2759"/>
<dbReference type="PhylomeDB" id="Q4FZG7"/>
<dbReference type="TreeFam" id="TF106191"/>
<dbReference type="BioGRID-ORCS" id="223262">
    <property type="hits" value="3 hits in 78 CRISPR screens"/>
</dbReference>
<dbReference type="PRO" id="PR:Q4FZG7"/>
<dbReference type="Proteomes" id="UP000000589">
    <property type="component" value="Chromosome 14"/>
</dbReference>
<dbReference type="RNAct" id="Q4FZG7">
    <property type="molecule type" value="protein"/>
</dbReference>
<dbReference type="Bgee" id="ENSMUSG00000071229">
    <property type="expression patterns" value="Expressed in animal zygote and 24 other cell types or tissues"/>
</dbReference>
<dbReference type="GO" id="GO:0005743">
    <property type="term" value="C:mitochondrial inner membrane"/>
    <property type="evidence" value="ECO:0007669"/>
    <property type="project" value="UniProtKB-SubCell"/>
</dbReference>
<dbReference type="GO" id="GO:0005739">
    <property type="term" value="C:mitochondrion"/>
    <property type="evidence" value="ECO:0007005"/>
    <property type="project" value="MGI"/>
</dbReference>
<dbReference type="GO" id="GO:0046872">
    <property type="term" value="F:metal ion binding"/>
    <property type="evidence" value="ECO:0007669"/>
    <property type="project" value="UniProtKB-KW"/>
</dbReference>
<dbReference type="GO" id="GO:0015031">
    <property type="term" value="P:protein transport"/>
    <property type="evidence" value="ECO:0007669"/>
    <property type="project" value="UniProtKB-KW"/>
</dbReference>
<dbReference type="FunFam" id="1.10.287.810:FF:000003">
    <property type="entry name" value="Mitochondrial import inner membrane translocase subunit TIM8"/>
    <property type="match status" value="1"/>
</dbReference>
<dbReference type="Gene3D" id="1.10.287.810">
    <property type="entry name" value="Mitochondrial import inner membrane translocase subunit tim13 like domains"/>
    <property type="match status" value="1"/>
</dbReference>
<dbReference type="InterPro" id="IPR004217">
    <property type="entry name" value="Tim10-like"/>
</dbReference>
<dbReference type="InterPro" id="IPR035427">
    <property type="entry name" value="Tim10-like_dom_sf"/>
</dbReference>
<dbReference type="Pfam" id="PF02953">
    <property type="entry name" value="zf-Tim10_DDP"/>
    <property type="match status" value="1"/>
</dbReference>
<dbReference type="SUPFAM" id="SSF144122">
    <property type="entry name" value="Tim10-like"/>
    <property type="match status" value="1"/>
</dbReference>
<gene>
    <name type="primary">Timm8a2</name>
    <name type="synonym">Timm8ab</name>
</gene>
<comment type="function">
    <text evidence="1">Putative mitochondrial intermembrane chaperone that participates in the import and insertion of some multi-pass transmembrane proteins into the mitochondrial inner membrane. Also required for the transfer of beta-barrel precursors from the TOM complex to the sorting and assembly machinery (SAM complex) of the outer membrane. Acts as a chaperone-like protein that protects the hydrophobic precursors from aggregation and guide them through the mitochondrial intermembrane space (By similarity).</text>
</comment>
<comment type="subunit">
    <text evidence="1">Heterohexamer; possibly composed of 3 copies of TIMM8AB and 3 copies of TIMM13.</text>
</comment>
<comment type="subcellular location">
    <subcellularLocation>
        <location evidence="1">Mitochondrion inner membrane</location>
        <topology evidence="1">Peripheral membrane protein</topology>
        <orientation evidence="1">Intermembrane side</orientation>
    </subcellularLocation>
</comment>
<comment type="domain">
    <text evidence="1">The twin CX3C motif contains 4 conserved Cys residues that form 2 disulfide bonds in the mitochondrial intermembrane space. However, during the transit of Timm8ab from cytoplasm into mitochondrion, the Cys residues probably coordinate zinc, thereby preventing folding and allowing its transfer across mitochondrial outer membrane (By similarity).</text>
</comment>
<comment type="similarity">
    <text evidence="2">Belongs to the small Tim family.</text>
</comment>
<organism>
    <name type="scientific">Mus musculus</name>
    <name type="common">Mouse</name>
    <dbReference type="NCBI Taxonomy" id="10090"/>
    <lineage>
        <taxon>Eukaryota</taxon>
        <taxon>Metazoa</taxon>
        <taxon>Chordata</taxon>
        <taxon>Craniata</taxon>
        <taxon>Vertebrata</taxon>
        <taxon>Euteleostomi</taxon>
        <taxon>Mammalia</taxon>
        <taxon>Eutheria</taxon>
        <taxon>Euarchontoglires</taxon>
        <taxon>Glires</taxon>
        <taxon>Rodentia</taxon>
        <taxon>Myomorpha</taxon>
        <taxon>Muroidea</taxon>
        <taxon>Muridae</taxon>
        <taxon>Murinae</taxon>
        <taxon>Mus</taxon>
        <taxon>Mus</taxon>
    </lineage>
</organism>
<evidence type="ECO:0000250" key="1"/>
<evidence type="ECO:0000305" key="2"/>
<keyword id="KW-0143">Chaperone</keyword>
<keyword id="KW-1015">Disulfide bond</keyword>
<keyword id="KW-0472">Membrane</keyword>
<keyword id="KW-0479">Metal-binding</keyword>
<keyword id="KW-0496">Mitochondrion</keyword>
<keyword id="KW-0999">Mitochondrion inner membrane</keyword>
<keyword id="KW-0653">Protein transport</keyword>
<keyword id="KW-1185">Reference proteome</keyword>
<keyword id="KW-0811">Translocation</keyword>
<keyword id="KW-0813">Transport</keyword>
<keyword id="KW-0862">Zinc</keyword>
<name>TI8AB_MOUSE</name>
<protein>
    <recommendedName>
        <fullName>Putative mitochondrial import inner membrane translocase subunit Tim8 A-B</fullName>
    </recommendedName>
</protein>
<reference key="1">
    <citation type="journal article" date="2004" name="Genome Res.">
        <title>The status, quality, and expansion of the NIH full-length cDNA project: the Mammalian Gene Collection (MGC).</title>
        <authorList>
            <consortium name="The MGC Project Team"/>
        </authorList>
    </citation>
    <scope>NUCLEOTIDE SEQUENCE [LARGE SCALE MRNA]</scope>
    <source>
        <tissue>Oocyte</tissue>
    </source>
</reference>
<proteinExistence type="inferred from homology"/>
<accession>Q4FZG7</accession>